<evidence type="ECO:0000250" key="1"/>
<evidence type="ECO:0000255" key="2"/>
<evidence type="ECO:0000305" key="3"/>
<reference key="1">
    <citation type="submission" date="2006-07" db="EMBL/GenBank/DDBJ databases">
        <authorList>
            <consortium name="NIH - Xenopus Gene Collection (XGC) project"/>
        </authorList>
    </citation>
    <scope>NUCLEOTIDE SEQUENCE [LARGE SCALE MRNA]</scope>
    <source>
        <tissue>Brain</tissue>
    </source>
</reference>
<organism>
    <name type="scientific">Xenopus tropicalis</name>
    <name type="common">Western clawed frog</name>
    <name type="synonym">Silurana tropicalis</name>
    <dbReference type="NCBI Taxonomy" id="8364"/>
    <lineage>
        <taxon>Eukaryota</taxon>
        <taxon>Metazoa</taxon>
        <taxon>Chordata</taxon>
        <taxon>Craniata</taxon>
        <taxon>Vertebrata</taxon>
        <taxon>Euteleostomi</taxon>
        <taxon>Amphibia</taxon>
        <taxon>Batrachia</taxon>
        <taxon>Anura</taxon>
        <taxon>Pipoidea</taxon>
        <taxon>Pipidae</taxon>
        <taxon>Xenopodinae</taxon>
        <taxon>Xenopus</taxon>
        <taxon>Silurana</taxon>
    </lineage>
</organism>
<dbReference type="EMBL" id="BC118822">
    <property type="protein sequence ID" value="AAI18823.1"/>
    <property type="molecule type" value="mRNA"/>
</dbReference>
<dbReference type="RefSeq" id="NP_001072235.1">
    <property type="nucleotide sequence ID" value="NM_001078767.1"/>
</dbReference>
<dbReference type="SMR" id="Q0VFH9"/>
<dbReference type="FunCoup" id="Q0VFH9">
    <property type="interactions" value="9"/>
</dbReference>
<dbReference type="STRING" id="8364.ENSXETP00000050220"/>
<dbReference type="PaxDb" id="8364-ENSXETP00000046789"/>
<dbReference type="DNASU" id="779682"/>
<dbReference type="GeneID" id="779682"/>
<dbReference type="KEGG" id="xtr:779682"/>
<dbReference type="AGR" id="Xenbase:XB-GENE-5816251"/>
<dbReference type="CTD" id="286183"/>
<dbReference type="Xenbase" id="XB-GENE-5816251">
    <property type="gene designation" value="nkain3"/>
</dbReference>
<dbReference type="eggNOG" id="KOG4556">
    <property type="taxonomic scope" value="Eukaryota"/>
</dbReference>
<dbReference type="InParanoid" id="Q0VFH9"/>
<dbReference type="OMA" id="TALWITW"/>
<dbReference type="OrthoDB" id="10050321at2759"/>
<dbReference type="Proteomes" id="UP000008143">
    <property type="component" value="Chromosome 6"/>
</dbReference>
<dbReference type="Bgee" id="ENSXETG00000021651">
    <property type="expression patterns" value="Expressed in brain and 4 other cell types or tissues"/>
</dbReference>
<dbReference type="ExpressionAtlas" id="Q0VFH9">
    <property type="expression patterns" value="differential"/>
</dbReference>
<dbReference type="GO" id="GO:0005886">
    <property type="term" value="C:plasma membrane"/>
    <property type="evidence" value="ECO:0007669"/>
    <property type="project" value="UniProtKB-SubCell"/>
</dbReference>
<dbReference type="InterPro" id="IPR008516">
    <property type="entry name" value="Na/K-Atpase_Interacting"/>
</dbReference>
<dbReference type="PANTHER" id="PTHR13084:SF2">
    <property type="entry name" value="SODIUM_POTASSIUM-TRANSPORTING ATPASE SUBUNIT BETA-1-INTERACTING PROTEIN 3"/>
    <property type="match status" value="1"/>
</dbReference>
<dbReference type="PANTHER" id="PTHR13084">
    <property type="entry name" value="T-CELL LYMPHOMA BREAKPOINT-ASSOCIATED TARGET 1-RELATED"/>
    <property type="match status" value="1"/>
</dbReference>
<dbReference type="Pfam" id="PF05640">
    <property type="entry name" value="NKAIN"/>
    <property type="match status" value="1"/>
</dbReference>
<keyword id="KW-1003">Cell membrane</keyword>
<keyword id="KW-0472">Membrane</keyword>
<keyword id="KW-1185">Reference proteome</keyword>
<keyword id="KW-0812">Transmembrane</keyword>
<keyword id="KW-1133">Transmembrane helix</keyword>
<name>NKAI3_XENTR</name>
<protein>
    <recommendedName>
        <fullName>Sodium/potassium-transporting ATPase subunit beta-1-interacting protein 3</fullName>
        <shortName>Na(+)/K(+)-transporting ATPase subunit beta-1-interacting protein 3</shortName>
    </recommendedName>
</protein>
<feature type="chain" id="PRO_0000310470" description="Sodium/potassium-transporting ATPase subunit beta-1-interacting protein 3">
    <location>
        <begin position="1"/>
        <end position="181"/>
    </location>
</feature>
<feature type="transmembrane region" description="Helical" evidence="2">
    <location>
        <begin position="5"/>
        <end position="22"/>
    </location>
</feature>
<feature type="transmembrane region" description="Helical" evidence="2">
    <location>
        <begin position="35"/>
        <end position="55"/>
    </location>
</feature>
<feature type="transmembrane region" description="Helical" evidence="2">
    <location>
        <begin position="62"/>
        <end position="82"/>
    </location>
</feature>
<feature type="transmembrane region" description="Helical" evidence="2">
    <location>
        <begin position="151"/>
        <end position="171"/>
    </location>
</feature>
<sequence length="181" mass="20779">MGCCTGRCTLIFICTLQMLVALERQIFDFLGYQWAPILGNFLHIIVVILGLFGTIQYRPRYIVAYTIWTAFWVAWNVFIICFYLEVGGLSKDTDLMTFNISIHRSWWREHGPGCVWRLVPAPPSKNLGDHSFISVTGCIIEFQYIEVIHSAVQILLSLIGFVYACYVISVITDEEDSCRHK</sequence>
<gene>
    <name type="primary">nkain3</name>
</gene>
<comment type="subunit">
    <text evidence="1">Interacts with atp1b1 C-terminus.</text>
</comment>
<comment type="subcellular location">
    <subcellularLocation>
        <location evidence="3">Cell membrane</location>
        <topology evidence="3">Multi-pass membrane protein</topology>
    </subcellularLocation>
</comment>
<comment type="similarity">
    <text evidence="3">Belongs to the NKAIN family.</text>
</comment>
<proteinExistence type="evidence at transcript level"/>
<accession>Q0VFH9</accession>